<reference key="1">
    <citation type="journal article" date="2010" name="ISME J.">
        <title>The complete genome sequence of the algal symbiont Dinoroseobacter shibae: a hitchhiker's guide to life in the sea.</title>
        <authorList>
            <person name="Wagner-Dobler I."/>
            <person name="Ballhausen B."/>
            <person name="Berger M."/>
            <person name="Brinkhoff T."/>
            <person name="Buchholz I."/>
            <person name="Bunk B."/>
            <person name="Cypionka H."/>
            <person name="Daniel R."/>
            <person name="Drepper T."/>
            <person name="Gerdts G."/>
            <person name="Hahnke S."/>
            <person name="Han C."/>
            <person name="Jahn D."/>
            <person name="Kalhoefer D."/>
            <person name="Kiss H."/>
            <person name="Klenk H.P."/>
            <person name="Kyrpides N."/>
            <person name="Liebl W."/>
            <person name="Liesegang H."/>
            <person name="Meincke L."/>
            <person name="Pati A."/>
            <person name="Petersen J."/>
            <person name="Piekarski T."/>
            <person name="Pommerenke C."/>
            <person name="Pradella S."/>
            <person name="Pukall R."/>
            <person name="Rabus R."/>
            <person name="Stackebrandt E."/>
            <person name="Thole S."/>
            <person name="Thompson L."/>
            <person name="Tielen P."/>
            <person name="Tomasch J."/>
            <person name="von Jan M."/>
            <person name="Wanphrut N."/>
            <person name="Wichels A."/>
            <person name="Zech H."/>
            <person name="Simon M."/>
        </authorList>
    </citation>
    <scope>NUCLEOTIDE SEQUENCE [LARGE SCALE GENOMIC DNA]</scope>
    <source>
        <strain>DSM 16493 / NCIMB 14021 / DFL 12</strain>
    </source>
</reference>
<comment type="function">
    <text evidence="1">Functions in the N-end rule pathway of protein degradation where it conjugates Leu, Phe and, less efficiently, Met from aminoacyl-tRNAs to the N-termini of proteins containing an N-terminal arginine or lysine.</text>
</comment>
<comment type="catalytic activity">
    <reaction evidence="1">
        <text>N-terminal L-lysyl-[protein] + L-leucyl-tRNA(Leu) = N-terminal L-leucyl-L-lysyl-[protein] + tRNA(Leu) + H(+)</text>
        <dbReference type="Rhea" id="RHEA:12340"/>
        <dbReference type="Rhea" id="RHEA-COMP:9613"/>
        <dbReference type="Rhea" id="RHEA-COMP:9622"/>
        <dbReference type="Rhea" id="RHEA-COMP:12670"/>
        <dbReference type="Rhea" id="RHEA-COMP:12671"/>
        <dbReference type="ChEBI" id="CHEBI:15378"/>
        <dbReference type="ChEBI" id="CHEBI:65249"/>
        <dbReference type="ChEBI" id="CHEBI:78442"/>
        <dbReference type="ChEBI" id="CHEBI:78494"/>
        <dbReference type="ChEBI" id="CHEBI:133043"/>
        <dbReference type="EC" id="2.3.2.6"/>
    </reaction>
</comment>
<comment type="catalytic activity">
    <reaction evidence="1">
        <text>N-terminal L-arginyl-[protein] + L-leucyl-tRNA(Leu) = N-terminal L-leucyl-L-arginyl-[protein] + tRNA(Leu) + H(+)</text>
        <dbReference type="Rhea" id="RHEA:50416"/>
        <dbReference type="Rhea" id="RHEA-COMP:9613"/>
        <dbReference type="Rhea" id="RHEA-COMP:9622"/>
        <dbReference type="Rhea" id="RHEA-COMP:12672"/>
        <dbReference type="Rhea" id="RHEA-COMP:12673"/>
        <dbReference type="ChEBI" id="CHEBI:15378"/>
        <dbReference type="ChEBI" id="CHEBI:64719"/>
        <dbReference type="ChEBI" id="CHEBI:78442"/>
        <dbReference type="ChEBI" id="CHEBI:78494"/>
        <dbReference type="ChEBI" id="CHEBI:133044"/>
        <dbReference type="EC" id="2.3.2.6"/>
    </reaction>
</comment>
<comment type="catalytic activity">
    <reaction evidence="1">
        <text>L-phenylalanyl-tRNA(Phe) + an N-terminal L-alpha-aminoacyl-[protein] = an N-terminal L-phenylalanyl-L-alpha-aminoacyl-[protein] + tRNA(Phe)</text>
        <dbReference type="Rhea" id="RHEA:43632"/>
        <dbReference type="Rhea" id="RHEA-COMP:9668"/>
        <dbReference type="Rhea" id="RHEA-COMP:9699"/>
        <dbReference type="Rhea" id="RHEA-COMP:10636"/>
        <dbReference type="Rhea" id="RHEA-COMP:10637"/>
        <dbReference type="ChEBI" id="CHEBI:78442"/>
        <dbReference type="ChEBI" id="CHEBI:78531"/>
        <dbReference type="ChEBI" id="CHEBI:78597"/>
        <dbReference type="ChEBI" id="CHEBI:83561"/>
        <dbReference type="EC" id="2.3.2.6"/>
    </reaction>
</comment>
<comment type="subcellular location">
    <subcellularLocation>
        <location evidence="1">Cytoplasm</location>
    </subcellularLocation>
</comment>
<comment type="similarity">
    <text evidence="1">Belongs to the L/F-transferase family.</text>
</comment>
<dbReference type="EC" id="2.3.2.6" evidence="1"/>
<dbReference type="EMBL" id="CP000830">
    <property type="protein sequence ID" value="ABV93136.1"/>
    <property type="molecule type" value="Genomic_DNA"/>
</dbReference>
<dbReference type="RefSeq" id="WP_012178066.1">
    <property type="nucleotide sequence ID" value="NC_009952.1"/>
</dbReference>
<dbReference type="SMR" id="A8LJB4"/>
<dbReference type="STRING" id="398580.Dshi_1394"/>
<dbReference type="KEGG" id="dsh:Dshi_1394"/>
<dbReference type="eggNOG" id="COG2360">
    <property type="taxonomic scope" value="Bacteria"/>
</dbReference>
<dbReference type="HOGENOM" id="CLU_075045_1_1_5"/>
<dbReference type="OrthoDB" id="9790282at2"/>
<dbReference type="Proteomes" id="UP000006833">
    <property type="component" value="Chromosome"/>
</dbReference>
<dbReference type="GO" id="GO:0005737">
    <property type="term" value="C:cytoplasm"/>
    <property type="evidence" value="ECO:0007669"/>
    <property type="project" value="UniProtKB-SubCell"/>
</dbReference>
<dbReference type="GO" id="GO:0008914">
    <property type="term" value="F:leucyl-tRNA--protein transferase activity"/>
    <property type="evidence" value="ECO:0007669"/>
    <property type="project" value="UniProtKB-UniRule"/>
</dbReference>
<dbReference type="GO" id="GO:0030163">
    <property type="term" value="P:protein catabolic process"/>
    <property type="evidence" value="ECO:0007669"/>
    <property type="project" value="UniProtKB-UniRule"/>
</dbReference>
<dbReference type="Gene3D" id="3.40.630.70">
    <property type="entry name" value="Leucyl/phenylalanyl-tRNA-protein transferase, C-terminal domain"/>
    <property type="match status" value="1"/>
</dbReference>
<dbReference type="HAMAP" id="MF_00688">
    <property type="entry name" value="Leu_Phe_trans"/>
    <property type="match status" value="1"/>
</dbReference>
<dbReference type="InterPro" id="IPR016181">
    <property type="entry name" value="Acyl_CoA_acyltransferase"/>
</dbReference>
<dbReference type="InterPro" id="IPR004616">
    <property type="entry name" value="Leu/Phe-tRNA_Trfase"/>
</dbReference>
<dbReference type="InterPro" id="IPR042203">
    <property type="entry name" value="Leu/Phe-tRNA_Trfase_C"/>
</dbReference>
<dbReference type="NCBIfam" id="TIGR00667">
    <property type="entry name" value="aat"/>
    <property type="match status" value="1"/>
</dbReference>
<dbReference type="PANTHER" id="PTHR30098">
    <property type="entry name" value="LEUCYL/PHENYLALANYL-TRNA--PROTEIN TRANSFERASE"/>
    <property type="match status" value="1"/>
</dbReference>
<dbReference type="PANTHER" id="PTHR30098:SF2">
    <property type="entry name" value="LEUCYL_PHENYLALANYL-TRNA--PROTEIN TRANSFERASE"/>
    <property type="match status" value="1"/>
</dbReference>
<dbReference type="Pfam" id="PF03588">
    <property type="entry name" value="Leu_Phe_trans"/>
    <property type="match status" value="1"/>
</dbReference>
<dbReference type="SUPFAM" id="SSF55729">
    <property type="entry name" value="Acyl-CoA N-acyltransferases (Nat)"/>
    <property type="match status" value="1"/>
</dbReference>
<protein>
    <recommendedName>
        <fullName evidence="1">Leucyl/phenylalanyl-tRNA--protein transferase</fullName>
        <ecNumber evidence="1">2.3.2.6</ecNumber>
    </recommendedName>
    <alternativeName>
        <fullName evidence="1">L/F-transferase</fullName>
    </alternativeName>
    <alternativeName>
        <fullName evidence="1">Leucyltransferase</fullName>
    </alternativeName>
    <alternativeName>
        <fullName evidence="1">Phenyalanyltransferase</fullName>
    </alternativeName>
</protein>
<keyword id="KW-0012">Acyltransferase</keyword>
<keyword id="KW-0963">Cytoplasm</keyword>
<keyword id="KW-1185">Reference proteome</keyword>
<keyword id="KW-0808">Transferase</keyword>
<organism>
    <name type="scientific">Dinoroseobacter shibae (strain DSM 16493 / NCIMB 14021 / DFL 12)</name>
    <dbReference type="NCBI Taxonomy" id="398580"/>
    <lineage>
        <taxon>Bacteria</taxon>
        <taxon>Pseudomonadati</taxon>
        <taxon>Pseudomonadota</taxon>
        <taxon>Alphaproteobacteria</taxon>
        <taxon>Rhodobacterales</taxon>
        <taxon>Roseobacteraceae</taxon>
        <taxon>Dinoroseobacter</taxon>
    </lineage>
</organism>
<sequence length="223" mass="24514">MAHDMYPNSPPRLTPDLLLRGYMAGIFPMAEARDDDAVFWVDPRQRGVLPLDGVHVSRKLRRFLARTEWTLSLNQDFAGVVAGCADRDETWINDQIFDAYTALHAMGFAHALEVREDGALIGGVYGVAIGTAFFGESMFSRRPNGSKVALVALCAHLRRCGYTLFDTQFVTPHLATMGAVEISRDSYRAQLRAALSAKADLTARPLPRTPAQIRAPGPGQPRS</sequence>
<evidence type="ECO:0000255" key="1">
    <source>
        <dbReference type="HAMAP-Rule" id="MF_00688"/>
    </source>
</evidence>
<accession>A8LJB4</accession>
<feature type="chain" id="PRO_1000083094" description="Leucyl/phenylalanyl-tRNA--protein transferase">
    <location>
        <begin position="1"/>
        <end position="223"/>
    </location>
</feature>
<name>LFTR_DINSH</name>
<proteinExistence type="inferred from homology"/>
<gene>
    <name evidence="1" type="primary">aat</name>
    <name type="ordered locus">Dshi_1394</name>
</gene>